<name>GAL1_ECO45</name>
<sequence>MSLKEKTQSLFANAFGYPATHTIQAPGRVNLIGEHTDYNDGFVLPCAIDYQTVISCAPRDDRKVRVMAADYENQLDEFSLDAPIVAHENYQWANYVRGVVKHLQLRNNSFGGVDMVISGNVPQGAGLSSSASLEVAVGTVLQQLYHLPLDGAQIALNGQEAENQFVGCNCGIMDQLISALGKKDHALLIDCRSLGTKAVSMPKGVAVVIINSNFKRTLVGSEYNTRREQCETGARFFQQPALRDVTIEEFNAVAHELDPIVAKRVRHILTENARTVEAASALEQGDLKRMGELMAESHASMRDDFEITVPQIDTLVEIVKAVIGDKGGVRMTGGGFGGCIVALFPEELVPAVQQAVAEQYEAKTGIKETFYVCKPSQGAGQC</sequence>
<protein>
    <recommendedName>
        <fullName evidence="1">Galactokinase</fullName>
        <ecNumber evidence="1">2.7.1.6</ecNumber>
    </recommendedName>
    <alternativeName>
        <fullName evidence="1">Galactose kinase</fullName>
    </alternativeName>
</protein>
<organism>
    <name type="scientific">Escherichia coli O45:K1 (strain S88 / ExPEC)</name>
    <dbReference type="NCBI Taxonomy" id="585035"/>
    <lineage>
        <taxon>Bacteria</taxon>
        <taxon>Pseudomonadati</taxon>
        <taxon>Pseudomonadota</taxon>
        <taxon>Gammaproteobacteria</taxon>
        <taxon>Enterobacterales</taxon>
        <taxon>Enterobacteriaceae</taxon>
        <taxon>Escherichia</taxon>
    </lineage>
</organism>
<accession>B7MGL4</accession>
<proteinExistence type="inferred from homology"/>
<evidence type="ECO:0000255" key="1">
    <source>
        <dbReference type="HAMAP-Rule" id="MF_00246"/>
    </source>
</evidence>
<gene>
    <name evidence="1" type="primary">galK</name>
    <name type="ordered locus">ECS88_0773</name>
</gene>
<comment type="function">
    <text evidence="1">Catalyzes the transfer of the gamma-phosphate of ATP to D-galactose to form alpha-D-galactose-1-phosphate (Gal-1-P).</text>
</comment>
<comment type="catalytic activity">
    <reaction evidence="1">
        <text>alpha-D-galactose + ATP = alpha-D-galactose 1-phosphate + ADP + H(+)</text>
        <dbReference type="Rhea" id="RHEA:13553"/>
        <dbReference type="ChEBI" id="CHEBI:15378"/>
        <dbReference type="ChEBI" id="CHEBI:28061"/>
        <dbReference type="ChEBI" id="CHEBI:30616"/>
        <dbReference type="ChEBI" id="CHEBI:58336"/>
        <dbReference type="ChEBI" id="CHEBI:456216"/>
        <dbReference type="EC" id="2.7.1.6"/>
    </reaction>
</comment>
<comment type="pathway">
    <text evidence="1">Carbohydrate metabolism; galactose metabolism.</text>
</comment>
<comment type="subcellular location">
    <subcellularLocation>
        <location evidence="1">Cytoplasm</location>
    </subcellularLocation>
</comment>
<comment type="similarity">
    <text evidence="1">Belongs to the GHMP kinase family. GalK subfamily.</text>
</comment>
<feature type="chain" id="PRO_1000190061" description="Galactokinase">
    <location>
        <begin position="1"/>
        <end position="382"/>
    </location>
</feature>
<feature type="active site" description="Proton acceptor" evidence="1">
    <location>
        <position position="174"/>
    </location>
</feature>
<feature type="binding site" evidence="1">
    <location>
        <begin position="34"/>
        <end position="37"/>
    </location>
    <ligand>
        <name>substrate</name>
    </ligand>
</feature>
<feature type="binding site" evidence="1">
    <location>
        <begin position="124"/>
        <end position="130"/>
    </location>
    <ligand>
        <name>ATP</name>
        <dbReference type="ChEBI" id="CHEBI:30616"/>
    </ligand>
</feature>
<feature type="binding site" evidence="1">
    <location>
        <position position="130"/>
    </location>
    <ligand>
        <name>Mg(2+)</name>
        <dbReference type="ChEBI" id="CHEBI:18420"/>
    </ligand>
</feature>
<feature type="binding site" evidence="1">
    <location>
        <position position="162"/>
    </location>
    <ligand>
        <name>Mg(2+)</name>
        <dbReference type="ChEBI" id="CHEBI:18420"/>
    </ligand>
</feature>
<feature type="binding site" evidence="1">
    <location>
        <position position="223"/>
    </location>
    <ligand>
        <name>substrate</name>
    </ligand>
</feature>
<feature type="site" description="Transition state stabilizer" evidence="1">
    <location>
        <position position="28"/>
    </location>
</feature>
<keyword id="KW-0067">ATP-binding</keyword>
<keyword id="KW-0119">Carbohydrate metabolism</keyword>
<keyword id="KW-0963">Cytoplasm</keyword>
<keyword id="KW-0299">Galactose metabolism</keyword>
<keyword id="KW-0418">Kinase</keyword>
<keyword id="KW-0460">Magnesium</keyword>
<keyword id="KW-0479">Metal-binding</keyword>
<keyword id="KW-0547">Nucleotide-binding</keyword>
<keyword id="KW-1185">Reference proteome</keyword>
<keyword id="KW-0808">Transferase</keyword>
<reference key="1">
    <citation type="journal article" date="2009" name="PLoS Genet.">
        <title>Organised genome dynamics in the Escherichia coli species results in highly diverse adaptive paths.</title>
        <authorList>
            <person name="Touchon M."/>
            <person name="Hoede C."/>
            <person name="Tenaillon O."/>
            <person name="Barbe V."/>
            <person name="Baeriswyl S."/>
            <person name="Bidet P."/>
            <person name="Bingen E."/>
            <person name="Bonacorsi S."/>
            <person name="Bouchier C."/>
            <person name="Bouvet O."/>
            <person name="Calteau A."/>
            <person name="Chiapello H."/>
            <person name="Clermont O."/>
            <person name="Cruveiller S."/>
            <person name="Danchin A."/>
            <person name="Diard M."/>
            <person name="Dossat C."/>
            <person name="Karoui M.E."/>
            <person name="Frapy E."/>
            <person name="Garry L."/>
            <person name="Ghigo J.M."/>
            <person name="Gilles A.M."/>
            <person name="Johnson J."/>
            <person name="Le Bouguenec C."/>
            <person name="Lescat M."/>
            <person name="Mangenot S."/>
            <person name="Martinez-Jehanne V."/>
            <person name="Matic I."/>
            <person name="Nassif X."/>
            <person name="Oztas S."/>
            <person name="Petit M.A."/>
            <person name="Pichon C."/>
            <person name="Rouy Z."/>
            <person name="Ruf C.S."/>
            <person name="Schneider D."/>
            <person name="Tourret J."/>
            <person name="Vacherie B."/>
            <person name="Vallenet D."/>
            <person name="Medigue C."/>
            <person name="Rocha E.P.C."/>
            <person name="Denamur E."/>
        </authorList>
    </citation>
    <scope>NUCLEOTIDE SEQUENCE [LARGE SCALE GENOMIC DNA]</scope>
    <source>
        <strain>S88 / ExPEC</strain>
    </source>
</reference>
<dbReference type="EC" id="2.7.1.6" evidence="1"/>
<dbReference type="EMBL" id="CU928161">
    <property type="protein sequence ID" value="CAR02112.1"/>
    <property type="molecule type" value="Genomic_DNA"/>
</dbReference>
<dbReference type="RefSeq" id="WP_000053414.1">
    <property type="nucleotide sequence ID" value="NC_011742.1"/>
</dbReference>
<dbReference type="SMR" id="B7MGL4"/>
<dbReference type="KEGG" id="ecz:ECS88_0773"/>
<dbReference type="HOGENOM" id="CLU_017814_2_1_6"/>
<dbReference type="UniPathway" id="UPA00214"/>
<dbReference type="Proteomes" id="UP000000747">
    <property type="component" value="Chromosome"/>
</dbReference>
<dbReference type="GO" id="GO:0005829">
    <property type="term" value="C:cytosol"/>
    <property type="evidence" value="ECO:0007669"/>
    <property type="project" value="TreeGrafter"/>
</dbReference>
<dbReference type="GO" id="GO:0005524">
    <property type="term" value="F:ATP binding"/>
    <property type="evidence" value="ECO:0007669"/>
    <property type="project" value="UniProtKB-UniRule"/>
</dbReference>
<dbReference type="GO" id="GO:0004335">
    <property type="term" value="F:galactokinase activity"/>
    <property type="evidence" value="ECO:0007669"/>
    <property type="project" value="UniProtKB-UniRule"/>
</dbReference>
<dbReference type="GO" id="GO:0000287">
    <property type="term" value="F:magnesium ion binding"/>
    <property type="evidence" value="ECO:0007669"/>
    <property type="project" value="UniProtKB-UniRule"/>
</dbReference>
<dbReference type="GO" id="GO:0006012">
    <property type="term" value="P:galactose metabolic process"/>
    <property type="evidence" value="ECO:0007669"/>
    <property type="project" value="UniProtKB-UniRule"/>
</dbReference>
<dbReference type="FunFam" id="3.30.230.10:FF:000017">
    <property type="entry name" value="Galactokinase"/>
    <property type="match status" value="1"/>
</dbReference>
<dbReference type="FunFam" id="3.30.70.890:FF:000001">
    <property type="entry name" value="Galactokinase"/>
    <property type="match status" value="1"/>
</dbReference>
<dbReference type="Gene3D" id="3.30.230.10">
    <property type="match status" value="1"/>
</dbReference>
<dbReference type="Gene3D" id="3.30.70.890">
    <property type="entry name" value="GHMP kinase, C-terminal domain"/>
    <property type="match status" value="1"/>
</dbReference>
<dbReference type="HAMAP" id="MF_00246">
    <property type="entry name" value="Galactokinase"/>
    <property type="match status" value="1"/>
</dbReference>
<dbReference type="InterPro" id="IPR000705">
    <property type="entry name" value="Galactokinase"/>
</dbReference>
<dbReference type="InterPro" id="IPR022963">
    <property type="entry name" value="Galactokinase_bac"/>
</dbReference>
<dbReference type="InterPro" id="IPR019741">
    <property type="entry name" value="Galactokinase_CS"/>
</dbReference>
<dbReference type="InterPro" id="IPR019539">
    <property type="entry name" value="GalKase_N"/>
</dbReference>
<dbReference type="InterPro" id="IPR013750">
    <property type="entry name" value="GHMP_kinase_C_dom"/>
</dbReference>
<dbReference type="InterPro" id="IPR036554">
    <property type="entry name" value="GHMP_kinase_C_sf"/>
</dbReference>
<dbReference type="InterPro" id="IPR006204">
    <property type="entry name" value="GHMP_kinase_N_dom"/>
</dbReference>
<dbReference type="InterPro" id="IPR006203">
    <property type="entry name" value="GHMP_knse_ATP-bd_CS"/>
</dbReference>
<dbReference type="InterPro" id="IPR006206">
    <property type="entry name" value="Mevalonate/galactokinase"/>
</dbReference>
<dbReference type="InterPro" id="IPR020568">
    <property type="entry name" value="Ribosomal_Su5_D2-typ_SF"/>
</dbReference>
<dbReference type="InterPro" id="IPR014721">
    <property type="entry name" value="Ribsml_uS5_D2-typ_fold_subgr"/>
</dbReference>
<dbReference type="NCBIfam" id="TIGR00131">
    <property type="entry name" value="gal_kin"/>
    <property type="match status" value="1"/>
</dbReference>
<dbReference type="NCBIfam" id="NF003472">
    <property type="entry name" value="PRK05101.1"/>
    <property type="match status" value="1"/>
</dbReference>
<dbReference type="PANTHER" id="PTHR10457:SF7">
    <property type="entry name" value="GALACTOKINASE-RELATED"/>
    <property type="match status" value="1"/>
</dbReference>
<dbReference type="PANTHER" id="PTHR10457">
    <property type="entry name" value="MEVALONATE KINASE/GALACTOKINASE"/>
    <property type="match status" value="1"/>
</dbReference>
<dbReference type="Pfam" id="PF10509">
    <property type="entry name" value="GalKase_gal_bdg"/>
    <property type="match status" value="1"/>
</dbReference>
<dbReference type="Pfam" id="PF08544">
    <property type="entry name" value="GHMP_kinases_C"/>
    <property type="match status" value="1"/>
</dbReference>
<dbReference type="Pfam" id="PF00288">
    <property type="entry name" value="GHMP_kinases_N"/>
    <property type="match status" value="1"/>
</dbReference>
<dbReference type="PIRSF" id="PIRSF000530">
    <property type="entry name" value="Galactokinase"/>
    <property type="match status" value="1"/>
</dbReference>
<dbReference type="PRINTS" id="PR00473">
    <property type="entry name" value="GALCTOKINASE"/>
</dbReference>
<dbReference type="PRINTS" id="PR00959">
    <property type="entry name" value="MEVGALKINASE"/>
</dbReference>
<dbReference type="SUPFAM" id="SSF55060">
    <property type="entry name" value="GHMP Kinase, C-terminal domain"/>
    <property type="match status" value="1"/>
</dbReference>
<dbReference type="SUPFAM" id="SSF54211">
    <property type="entry name" value="Ribosomal protein S5 domain 2-like"/>
    <property type="match status" value="1"/>
</dbReference>
<dbReference type="PROSITE" id="PS00106">
    <property type="entry name" value="GALACTOKINASE"/>
    <property type="match status" value="1"/>
</dbReference>
<dbReference type="PROSITE" id="PS00627">
    <property type="entry name" value="GHMP_KINASES_ATP"/>
    <property type="match status" value="1"/>
</dbReference>